<keyword id="KW-0328">Glycosyltransferase</keyword>
<keyword id="KW-0441">Lipid A biosynthesis</keyword>
<keyword id="KW-0444">Lipid biosynthesis</keyword>
<keyword id="KW-0443">Lipid metabolism</keyword>
<keyword id="KW-0808">Transferase</keyword>
<name>LPXB_SALA4</name>
<comment type="function">
    <text evidence="1">Condensation of UDP-2,3-diacylglucosamine and 2,3-diacylglucosamine-1-phosphate to form lipid A disaccharide, a precursor of lipid A, a phosphorylated glycolipid that anchors the lipopolysaccharide to the outer membrane of the cell.</text>
</comment>
<comment type="catalytic activity">
    <reaction evidence="1">
        <text>2-N,3-O-bis[(3R)-3-hydroxytetradecanoyl]-alpha-D-glucosaminyl 1-phosphate + UDP-2-N,3-O-bis[(3R)-3-hydroxytetradecanoyl]-alpha-D-glucosamine = lipid A disaccharide (E. coli) + UDP + H(+)</text>
        <dbReference type="Rhea" id="RHEA:22668"/>
        <dbReference type="ChEBI" id="CHEBI:15378"/>
        <dbReference type="ChEBI" id="CHEBI:57957"/>
        <dbReference type="ChEBI" id="CHEBI:58223"/>
        <dbReference type="ChEBI" id="CHEBI:58466"/>
        <dbReference type="ChEBI" id="CHEBI:78847"/>
    </reaction>
</comment>
<comment type="catalytic activity">
    <reaction evidence="1">
        <text>a lipid X + a UDP-2-N,3-O-bis[(3R)-3-hydroxyacyl]-alpha-D-glucosamine = a lipid A disaccharide + UDP + H(+)</text>
        <dbReference type="Rhea" id="RHEA:67828"/>
        <dbReference type="ChEBI" id="CHEBI:15378"/>
        <dbReference type="ChEBI" id="CHEBI:58223"/>
        <dbReference type="ChEBI" id="CHEBI:137748"/>
        <dbReference type="ChEBI" id="CHEBI:176338"/>
        <dbReference type="ChEBI" id="CHEBI:176343"/>
        <dbReference type="EC" id="2.4.1.182"/>
    </reaction>
</comment>
<comment type="pathway">
    <text evidence="1">Glycolipid biosynthesis; lipid IV(A) biosynthesis; lipid IV(A) from (3R)-3-hydroxytetradecanoyl-[acyl-carrier-protein] and UDP-N-acetyl-alpha-D-glucosamine: step 5/6.</text>
</comment>
<comment type="similarity">
    <text evidence="1">Belongs to the LpxB family.</text>
</comment>
<proteinExistence type="inferred from homology"/>
<protein>
    <recommendedName>
        <fullName evidence="1">Lipid-A-disaccharide synthase</fullName>
        <ecNumber evidence="1">2.4.1.182</ecNumber>
    </recommendedName>
</protein>
<gene>
    <name evidence="1" type="primary">lpxB</name>
    <name type="ordered locus">SeAg_B0270</name>
</gene>
<evidence type="ECO:0000255" key="1">
    <source>
        <dbReference type="HAMAP-Rule" id="MF_00392"/>
    </source>
</evidence>
<organism>
    <name type="scientific">Salmonella agona (strain SL483)</name>
    <dbReference type="NCBI Taxonomy" id="454166"/>
    <lineage>
        <taxon>Bacteria</taxon>
        <taxon>Pseudomonadati</taxon>
        <taxon>Pseudomonadota</taxon>
        <taxon>Gammaproteobacteria</taxon>
        <taxon>Enterobacterales</taxon>
        <taxon>Enterobacteriaceae</taxon>
        <taxon>Salmonella</taxon>
    </lineage>
</organism>
<reference key="1">
    <citation type="journal article" date="2011" name="J. Bacteriol.">
        <title>Comparative genomics of 28 Salmonella enterica isolates: evidence for CRISPR-mediated adaptive sublineage evolution.</title>
        <authorList>
            <person name="Fricke W.F."/>
            <person name="Mammel M.K."/>
            <person name="McDermott P.F."/>
            <person name="Tartera C."/>
            <person name="White D.G."/>
            <person name="Leclerc J.E."/>
            <person name="Ravel J."/>
            <person name="Cebula T.A."/>
        </authorList>
    </citation>
    <scope>NUCLEOTIDE SEQUENCE [LARGE SCALE GENOMIC DNA]</scope>
    <source>
        <strain>SL483</strain>
    </source>
</reference>
<accession>B5F8U3</accession>
<sequence>MAAQRPLTIALVAGETSGDILGAGLIRALKARVPNARFVGVAGPRMQAEGCEAWYEMEELAVMGIVEVLGRLRRLLHIRADLTRRFTELKPDVFVGIDAPDFNITLEGNLKKQGIKTIHYVSPSVWAWRQKRVFKIGRSTHMVLAFLPFEKAFYDKFNVPCRFIGHTMADAMPLDPDKNAARDVLGIPHDAHCLALLPGSRGAEVEMLSADFLKTAQLLRQRYPDLEVVVPLVNAKRREQFEKIKAEVAPDLAAHLLDGMAREAMIASDAALLASGTAALECMLAKCPMVVGYRMKPFTFWLAKRLVKTEYVSLPNLLAGRELVKELLQEECEPQKLAEALLPLLANGKTSHAMHDTFRELHQQIRCNADEQAADAVLELAQ</sequence>
<feature type="chain" id="PRO_1000123057" description="Lipid-A-disaccharide synthase">
    <location>
        <begin position="1"/>
        <end position="382"/>
    </location>
</feature>
<dbReference type="EC" id="2.4.1.182" evidence="1"/>
<dbReference type="EMBL" id="CP001138">
    <property type="protein sequence ID" value="ACH50660.1"/>
    <property type="molecule type" value="Genomic_DNA"/>
</dbReference>
<dbReference type="RefSeq" id="WP_000741214.1">
    <property type="nucleotide sequence ID" value="NC_011149.1"/>
</dbReference>
<dbReference type="SMR" id="B5F8U3"/>
<dbReference type="CAZy" id="GT19">
    <property type="family name" value="Glycosyltransferase Family 19"/>
</dbReference>
<dbReference type="KEGG" id="sea:SeAg_B0270"/>
<dbReference type="HOGENOM" id="CLU_036577_3_0_6"/>
<dbReference type="UniPathway" id="UPA00359">
    <property type="reaction ID" value="UER00481"/>
</dbReference>
<dbReference type="Proteomes" id="UP000008819">
    <property type="component" value="Chromosome"/>
</dbReference>
<dbReference type="GO" id="GO:0016020">
    <property type="term" value="C:membrane"/>
    <property type="evidence" value="ECO:0007669"/>
    <property type="project" value="GOC"/>
</dbReference>
<dbReference type="GO" id="GO:0008915">
    <property type="term" value="F:lipid-A-disaccharide synthase activity"/>
    <property type="evidence" value="ECO:0007669"/>
    <property type="project" value="UniProtKB-UniRule"/>
</dbReference>
<dbReference type="GO" id="GO:0005543">
    <property type="term" value="F:phospholipid binding"/>
    <property type="evidence" value="ECO:0007669"/>
    <property type="project" value="TreeGrafter"/>
</dbReference>
<dbReference type="GO" id="GO:0009245">
    <property type="term" value="P:lipid A biosynthetic process"/>
    <property type="evidence" value="ECO:0007669"/>
    <property type="project" value="UniProtKB-UniRule"/>
</dbReference>
<dbReference type="CDD" id="cd01635">
    <property type="entry name" value="Glycosyltransferase_GTB-type"/>
    <property type="match status" value="1"/>
</dbReference>
<dbReference type="HAMAP" id="MF_00392">
    <property type="entry name" value="LpxB"/>
    <property type="match status" value="1"/>
</dbReference>
<dbReference type="InterPro" id="IPR003835">
    <property type="entry name" value="Glyco_trans_19"/>
</dbReference>
<dbReference type="NCBIfam" id="TIGR00215">
    <property type="entry name" value="lpxB"/>
    <property type="match status" value="1"/>
</dbReference>
<dbReference type="PANTHER" id="PTHR30372">
    <property type="entry name" value="LIPID-A-DISACCHARIDE SYNTHASE"/>
    <property type="match status" value="1"/>
</dbReference>
<dbReference type="PANTHER" id="PTHR30372:SF4">
    <property type="entry name" value="LIPID-A-DISACCHARIDE SYNTHASE, MITOCHONDRIAL-RELATED"/>
    <property type="match status" value="1"/>
</dbReference>
<dbReference type="Pfam" id="PF02684">
    <property type="entry name" value="LpxB"/>
    <property type="match status" value="1"/>
</dbReference>
<dbReference type="SUPFAM" id="SSF53756">
    <property type="entry name" value="UDP-Glycosyltransferase/glycogen phosphorylase"/>
    <property type="match status" value="1"/>
</dbReference>